<accession>C1CQY0</accession>
<evidence type="ECO:0000255" key="1">
    <source>
        <dbReference type="HAMAP-Rule" id="MF_00110"/>
    </source>
</evidence>
<dbReference type="EC" id="4.2.3.4" evidence="1"/>
<dbReference type="EMBL" id="CP000921">
    <property type="protein sequence ID" value="ACO22375.1"/>
    <property type="molecule type" value="Genomic_DNA"/>
</dbReference>
<dbReference type="RefSeq" id="WP_000702164.1">
    <property type="nucleotide sequence ID" value="NC_012469.1"/>
</dbReference>
<dbReference type="SMR" id="C1CQY0"/>
<dbReference type="KEGG" id="snt:SPT_0898"/>
<dbReference type="HOGENOM" id="CLU_001201_0_2_9"/>
<dbReference type="UniPathway" id="UPA00053">
    <property type="reaction ID" value="UER00085"/>
</dbReference>
<dbReference type="GO" id="GO:0005737">
    <property type="term" value="C:cytoplasm"/>
    <property type="evidence" value="ECO:0007669"/>
    <property type="project" value="UniProtKB-SubCell"/>
</dbReference>
<dbReference type="GO" id="GO:0003856">
    <property type="term" value="F:3-dehydroquinate synthase activity"/>
    <property type="evidence" value="ECO:0007669"/>
    <property type="project" value="UniProtKB-UniRule"/>
</dbReference>
<dbReference type="GO" id="GO:0046872">
    <property type="term" value="F:metal ion binding"/>
    <property type="evidence" value="ECO:0007669"/>
    <property type="project" value="UniProtKB-KW"/>
</dbReference>
<dbReference type="GO" id="GO:0000166">
    <property type="term" value="F:nucleotide binding"/>
    <property type="evidence" value="ECO:0007669"/>
    <property type="project" value="UniProtKB-KW"/>
</dbReference>
<dbReference type="GO" id="GO:0008652">
    <property type="term" value="P:amino acid biosynthetic process"/>
    <property type="evidence" value="ECO:0007669"/>
    <property type="project" value="UniProtKB-KW"/>
</dbReference>
<dbReference type="GO" id="GO:0009073">
    <property type="term" value="P:aromatic amino acid family biosynthetic process"/>
    <property type="evidence" value="ECO:0007669"/>
    <property type="project" value="UniProtKB-KW"/>
</dbReference>
<dbReference type="GO" id="GO:0009423">
    <property type="term" value="P:chorismate biosynthetic process"/>
    <property type="evidence" value="ECO:0007669"/>
    <property type="project" value="UniProtKB-UniRule"/>
</dbReference>
<dbReference type="CDD" id="cd08195">
    <property type="entry name" value="DHQS"/>
    <property type="match status" value="1"/>
</dbReference>
<dbReference type="FunFam" id="1.20.1090.10:FF:000012">
    <property type="entry name" value="3-dehydroquinate synthase"/>
    <property type="match status" value="1"/>
</dbReference>
<dbReference type="FunFam" id="3.40.50.1970:FF:000001">
    <property type="entry name" value="3-dehydroquinate synthase"/>
    <property type="match status" value="1"/>
</dbReference>
<dbReference type="Gene3D" id="3.40.50.1970">
    <property type="match status" value="1"/>
</dbReference>
<dbReference type="Gene3D" id="1.20.1090.10">
    <property type="entry name" value="Dehydroquinate synthase-like - alpha domain"/>
    <property type="match status" value="1"/>
</dbReference>
<dbReference type="HAMAP" id="MF_00110">
    <property type="entry name" value="DHQ_synthase"/>
    <property type="match status" value="1"/>
</dbReference>
<dbReference type="InterPro" id="IPR050071">
    <property type="entry name" value="Dehydroquinate_synthase"/>
</dbReference>
<dbReference type="InterPro" id="IPR016037">
    <property type="entry name" value="DHQ_synth_AroB"/>
</dbReference>
<dbReference type="InterPro" id="IPR030963">
    <property type="entry name" value="DHQ_synth_fam"/>
</dbReference>
<dbReference type="InterPro" id="IPR030960">
    <property type="entry name" value="DHQS/DOIS_N"/>
</dbReference>
<dbReference type="InterPro" id="IPR056179">
    <property type="entry name" value="DHQS_C"/>
</dbReference>
<dbReference type="NCBIfam" id="TIGR01357">
    <property type="entry name" value="aroB"/>
    <property type="match status" value="1"/>
</dbReference>
<dbReference type="PANTHER" id="PTHR43622">
    <property type="entry name" value="3-DEHYDROQUINATE SYNTHASE"/>
    <property type="match status" value="1"/>
</dbReference>
<dbReference type="PANTHER" id="PTHR43622:SF7">
    <property type="entry name" value="3-DEHYDROQUINATE SYNTHASE, CHLOROPLASTIC"/>
    <property type="match status" value="1"/>
</dbReference>
<dbReference type="Pfam" id="PF01761">
    <property type="entry name" value="DHQ_synthase"/>
    <property type="match status" value="1"/>
</dbReference>
<dbReference type="Pfam" id="PF24621">
    <property type="entry name" value="DHQS_C"/>
    <property type="match status" value="1"/>
</dbReference>
<dbReference type="PIRSF" id="PIRSF001455">
    <property type="entry name" value="DHQ_synth"/>
    <property type="match status" value="1"/>
</dbReference>
<dbReference type="SUPFAM" id="SSF56796">
    <property type="entry name" value="Dehydroquinate synthase-like"/>
    <property type="match status" value="1"/>
</dbReference>
<proteinExistence type="inferred from homology"/>
<gene>
    <name evidence="1" type="primary">aroB</name>
    <name type="ordered locus">SPT_0898</name>
</gene>
<comment type="function">
    <text evidence="1">Catalyzes the conversion of 3-deoxy-D-arabino-heptulosonate 7-phosphate (DAHP) to dehydroquinate (DHQ).</text>
</comment>
<comment type="catalytic activity">
    <reaction evidence="1">
        <text>7-phospho-2-dehydro-3-deoxy-D-arabino-heptonate = 3-dehydroquinate + phosphate</text>
        <dbReference type="Rhea" id="RHEA:21968"/>
        <dbReference type="ChEBI" id="CHEBI:32364"/>
        <dbReference type="ChEBI" id="CHEBI:43474"/>
        <dbReference type="ChEBI" id="CHEBI:58394"/>
        <dbReference type="EC" id="4.2.3.4"/>
    </reaction>
</comment>
<comment type="cofactor">
    <cofactor evidence="1">
        <name>Co(2+)</name>
        <dbReference type="ChEBI" id="CHEBI:48828"/>
    </cofactor>
    <cofactor evidence="1">
        <name>Zn(2+)</name>
        <dbReference type="ChEBI" id="CHEBI:29105"/>
    </cofactor>
    <text evidence="1">Binds 1 divalent metal cation per subunit. Can use either Co(2+) or Zn(2+).</text>
</comment>
<comment type="cofactor">
    <cofactor evidence="1">
        <name>NAD(+)</name>
        <dbReference type="ChEBI" id="CHEBI:57540"/>
    </cofactor>
</comment>
<comment type="pathway">
    <text evidence="1">Metabolic intermediate biosynthesis; chorismate biosynthesis; chorismate from D-erythrose 4-phosphate and phosphoenolpyruvate: step 2/7.</text>
</comment>
<comment type="subcellular location">
    <subcellularLocation>
        <location evidence="1">Cytoplasm</location>
    </subcellularLocation>
</comment>
<comment type="similarity">
    <text evidence="1">Belongs to the sugar phosphate cyclases superfamily. Dehydroquinate synthase family.</text>
</comment>
<feature type="chain" id="PRO_1000119097" description="3-dehydroquinate synthase">
    <location>
        <begin position="1"/>
        <end position="355"/>
    </location>
</feature>
<feature type="binding site" evidence="1">
    <location>
        <begin position="71"/>
        <end position="76"/>
    </location>
    <ligand>
        <name>NAD(+)</name>
        <dbReference type="ChEBI" id="CHEBI:57540"/>
    </ligand>
</feature>
<feature type="binding site" evidence="1">
    <location>
        <begin position="105"/>
        <end position="109"/>
    </location>
    <ligand>
        <name>NAD(+)</name>
        <dbReference type="ChEBI" id="CHEBI:57540"/>
    </ligand>
</feature>
<feature type="binding site" evidence="1">
    <location>
        <begin position="129"/>
        <end position="130"/>
    </location>
    <ligand>
        <name>NAD(+)</name>
        <dbReference type="ChEBI" id="CHEBI:57540"/>
    </ligand>
</feature>
<feature type="binding site" evidence="1">
    <location>
        <position position="142"/>
    </location>
    <ligand>
        <name>NAD(+)</name>
        <dbReference type="ChEBI" id="CHEBI:57540"/>
    </ligand>
</feature>
<feature type="binding site" evidence="1">
    <location>
        <position position="151"/>
    </location>
    <ligand>
        <name>NAD(+)</name>
        <dbReference type="ChEBI" id="CHEBI:57540"/>
    </ligand>
</feature>
<feature type="binding site" evidence="1">
    <location>
        <position position="184"/>
    </location>
    <ligand>
        <name>Zn(2+)</name>
        <dbReference type="ChEBI" id="CHEBI:29105"/>
    </ligand>
</feature>
<feature type="binding site" evidence="1">
    <location>
        <position position="246"/>
    </location>
    <ligand>
        <name>Zn(2+)</name>
        <dbReference type="ChEBI" id="CHEBI:29105"/>
    </ligand>
</feature>
<feature type="binding site" evidence="1">
    <location>
        <position position="263"/>
    </location>
    <ligand>
        <name>Zn(2+)</name>
        <dbReference type="ChEBI" id="CHEBI:29105"/>
    </ligand>
</feature>
<reference key="1">
    <citation type="journal article" date="2010" name="Genome Biol.">
        <title>Structure and dynamics of the pan-genome of Streptococcus pneumoniae and closely related species.</title>
        <authorList>
            <person name="Donati C."/>
            <person name="Hiller N.L."/>
            <person name="Tettelin H."/>
            <person name="Muzzi A."/>
            <person name="Croucher N.J."/>
            <person name="Angiuoli S.V."/>
            <person name="Oggioni M."/>
            <person name="Dunning Hotopp J.C."/>
            <person name="Hu F.Z."/>
            <person name="Riley D.R."/>
            <person name="Covacci A."/>
            <person name="Mitchell T.J."/>
            <person name="Bentley S.D."/>
            <person name="Kilian M."/>
            <person name="Ehrlich G.D."/>
            <person name="Rappuoli R."/>
            <person name="Moxon E.R."/>
            <person name="Masignani V."/>
        </authorList>
    </citation>
    <scope>NUCLEOTIDE SEQUENCE [LARGE SCALE GENOMIC DNA]</scope>
    <source>
        <strain>Taiwan19F-14</strain>
    </source>
</reference>
<name>AROB_STRZT</name>
<sequence>MKIRIDIPHHPYDIQIEKGCMAQAGQWLRELWQPQKVVIVTDNHVASLYAEKVKLSLEDAGFQVAVFDFLEGEERKNLTTVQKVYEFLVKQGLTRSDGIVALGGGVVGDLAGFVASTYMRGIHFVQIPTSLTAQVDSSIGGKTGVNTPFAKNMVGTFAQPDGVLIDPLVLETLGKRELIEGMGEVIKYGLIEDPELWALLTGLNGSVESILEHAETLIEHSCQVKRKMVVEDELDNGIRLYLNFGHTIGHAIEATAGYGKVMHGEAVAMGMVQISKIAEEKGLMPAGITQSITEMCQKFGLPVDYENWEVDKLYQALTHDKKARGNTLKLVLVPELGSATIHPVSLEEMKDYLVK</sequence>
<organism>
    <name type="scientific">Streptococcus pneumoniae (strain Taiwan19F-14)</name>
    <dbReference type="NCBI Taxonomy" id="487213"/>
    <lineage>
        <taxon>Bacteria</taxon>
        <taxon>Bacillati</taxon>
        <taxon>Bacillota</taxon>
        <taxon>Bacilli</taxon>
        <taxon>Lactobacillales</taxon>
        <taxon>Streptococcaceae</taxon>
        <taxon>Streptococcus</taxon>
    </lineage>
</organism>
<keyword id="KW-0028">Amino-acid biosynthesis</keyword>
<keyword id="KW-0057">Aromatic amino acid biosynthesis</keyword>
<keyword id="KW-0170">Cobalt</keyword>
<keyword id="KW-0963">Cytoplasm</keyword>
<keyword id="KW-0456">Lyase</keyword>
<keyword id="KW-0479">Metal-binding</keyword>
<keyword id="KW-0520">NAD</keyword>
<keyword id="KW-0547">Nucleotide-binding</keyword>
<keyword id="KW-0862">Zinc</keyword>
<protein>
    <recommendedName>
        <fullName evidence="1">3-dehydroquinate synthase</fullName>
        <shortName evidence="1">DHQS</shortName>
        <ecNumber evidence="1">4.2.3.4</ecNumber>
    </recommendedName>
</protein>